<feature type="chain" id="PRO_1000081481" description="Large ribosomal subunit protein bL9">
    <location>
        <begin position="1"/>
        <end position="147"/>
    </location>
</feature>
<keyword id="KW-1185">Reference proteome</keyword>
<keyword id="KW-0687">Ribonucleoprotein</keyword>
<keyword id="KW-0689">Ribosomal protein</keyword>
<keyword id="KW-0694">RNA-binding</keyword>
<keyword id="KW-0699">rRNA-binding</keyword>
<sequence>MKVILKENIENLGHIGDIVKVAPGYARNYLLPKGFALEATTKNAKALDHAKKHLEYKKNKVLEQARVLAAKIEGLALNLSHQAGEEGKLFGAVTNMELAEQMKAQGIEIDRKKIILAEPIKHLGEFTATVKIHPEVNATLKVTVSKA</sequence>
<name>RL9_GEOUR</name>
<proteinExistence type="inferred from homology"/>
<accession>A5G7R0</accession>
<evidence type="ECO:0000255" key="1">
    <source>
        <dbReference type="HAMAP-Rule" id="MF_00503"/>
    </source>
</evidence>
<evidence type="ECO:0000305" key="2"/>
<comment type="function">
    <text evidence="1">Binds to the 23S rRNA.</text>
</comment>
<comment type="similarity">
    <text evidence="1">Belongs to the bacterial ribosomal protein bL9 family.</text>
</comment>
<reference key="1">
    <citation type="submission" date="2007-05" db="EMBL/GenBank/DDBJ databases">
        <title>Complete sequence of Geobacter uraniireducens Rf4.</title>
        <authorList>
            <consortium name="US DOE Joint Genome Institute"/>
            <person name="Copeland A."/>
            <person name="Lucas S."/>
            <person name="Lapidus A."/>
            <person name="Barry K."/>
            <person name="Detter J.C."/>
            <person name="Glavina del Rio T."/>
            <person name="Hammon N."/>
            <person name="Israni S."/>
            <person name="Dalin E."/>
            <person name="Tice H."/>
            <person name="Pitluck S."/>
            <person name="Chertkov O."/>
            <person name="Brettin T."/>
            <person name="Bruce D."/>
            <person name="Han C."/>
            <person name="Schmutz J."/>
            <person name="Larimer F."/>
            <person name="Land M."/>
            <person name="Hauser L."/>
            <person name="Kyrpides N."/>
            <person name="Mikhailova N."/>
            <person name="Shelobolina E."/>
            <person name="Aklujkar M."/>
            <person name="Lovley D."/>
            <person name="Richardson P."/>
        </authorList>
    </citation>
    <scope>NUCLEOTIDE SEQUENCE [LARGE SCALE GENOMIC DNA]</scope>
    <source>
        <strain>ATCC BAA-1134 / JCM 13001 / Rf4</strain>
    </source>
</reference>
<organism>
    <name type="scientific">Geotalea uraniireducens (strain Rf4)</name>
    <name type="common">Geobacter uraniireducens</name>
    <dbReference type="NCBI Taxonomy" id="351605"/>
    <lineage>
        <taxon>Bacteria</taxon>
        <taxon>Pseudomonadati</taxon>
        <taxon>Thermodesulfobacteriota</taxon>
        <taxon>Desulfuromonadia</taxon>
        <taxon>Geobacterales</taxon>
        <taxon>Geobacteraceae</taxon>
        <taxon>Geotalea</taxon>
    </lineage>
</organism>
<dbReference type="EMBL" id="CP000698">
    <property type="protein sequence ID" value="ABQ27828.1"/>
    <property type="molecule type" value="Genomic_DNA"/>
</dbReference>
<dbReference type="RefSeq" id="WP_011940481.1">
    <property type="nucleotide sequence ID" value="NC_009483.1"/>
</dbReference>
<dbReference type="SMR" id="A5G7R0"/>
<dbReference type="STRING" id="351605.Gura_3675"/>
<dbReference type="KEGG" id="gur:Gura_3675"/>
<dbReference type="HOGENOM" id="CLU_078938_3_0_7"/>
<dbReference type="OrthoDB" id="9788336at2"/>
<dbReference type="Proteomes" id="UP000006695">
    <property type="component" value="Chromosome"/>
</dbReference>
<dbReference type="GO" id="GO:1990904">
    <property type="term" value="C:ribonucleoprotein complex"/>
    <property type="evidence" value="ECO:0007669"/>
    <property type="project" value="UniProtKB-KW"/>
</dbReference>
<dbReference type="GO" id="GO:0005840">
    <property type="term" value="C:ribosome"/>
    <property type="evidence" value="ECO:0007669"/>
    <property type="project" value="UniProtKB-KW"/>
</dbReference>
<dbReference type="GO" id="GO:0019843">
    <property type="term" value="F:rRNA binding"/>
    <property type="evidence" value="ECO:0007669"/>
    <property type="project" value="UniProtKB-UniRule"/>
</dbReference>
<dbReference type="GO" id="GO:0003735">
    <property type="term" value="F:structural constituent of ribosome"/>
    <property type="evidence" value="ECO:0007669"/>
    <property type="project" value="InterPro"/>
</dbReference>
<dbReference type="GO" id="GO:0006412">
    <property type="term" value="P:translation"/>
    <property type="evidence" value="ECO:0007669"/>
    <property type="project" value="UniProtKB-UniRule"/>
</dbReference>
<dbReference type="FunFam" id="3.10.430.100:FF:000006">
    <property type="entry name" value="50S ribosomal protein L9"/>
    <property type="match status" value="1"/>
</dbReference>
<dbReference type="FunFam" id="3.40.5.10:FF:000003">
    <property type="entry name" value="50S ribosomal protein L9"/>
    <property type="match status" value="1"/>
</dbReference>
<dbReference type="Gene3D" id="3.10.430.100">
    <property type="entry name" value="Ribosomal protein L9, C-terminal domain"/>
    <property type="match status" value="1"/>
</dbReference>
<dbReference type="Gene3D" id="3.40.5.10">
    <property type="entry name" value="Ribosomal protein L9, N-terminal domain"/>
    <property type="match status" value="1"/>
</dbReference>
<dbReference type="HAMAP" id="MF_00503">
    <property type="entry name" value="Ribosomal_bL9"/>
    <property type="match status" value="1"/>
</dbReference>
<dbReference type="InterPro" id="IPR000244">
    <property type="entry name" value="Ribosomal_bL9"/>
</dbReference>
<dbReference type="InterPro" id="IPR009027">
    <property type="entry name" value="Ribosomal_bL9/RNase_H1_N"/>
</dbReference>
<dbReference type="InterPro" id="IPR020594">
    <property type="entry name" value="Ribosomal_bL9_bac/chp"/>
</dbReference>
<dbReference type="InterPro" id="IPR020069">
    <property type="entry name" value="Ribosomal_bL9_C"/>
</dbReference>
<dbReference type="InterPro" id="IPR036791">
    <property type="entry name" value="Ribosomal_bL9_C_sf"/>
</dbReference>
<dbReference type="InterPro" id="IPR020070">
    <property type="entry name" value="Ribosomal_bL9_N"/>
</dbReference>
<dbReference type="InterPro" id="IPR036935">
    <property type="entry name" value="Ribosomal_bL9_N_sf"/>
</dbReference>
<dbReference type="NCBIfam" id="TIGR00158">
    <property type="entry name" value="L9"/>
    <property type="match status" value="1"/>
</dbReference>
<dbReference type="PANTHER" id="PTHR21368">
    <property type="entry name" value="50S RIBOSOMAL PROTEIN L9"/>
    <property type="match status" value="1"/>
</dbReference>
<dbReference type="Pfam" id="PF03948">
    <property type="entry name" value="Ribosomal_L9_C"/>
    <property type="match status" value="1"/>
</dbReference>
<dbReference type="Pfam" id="PF01281">
    <property type="entry name" value="Ribosomal_L9_N"/>
    <property type="match status" value="1"/>
</dbReference>
<dbReference type="SUPFAM" id="SSF55658">
    <property type="entry name" value="L9 N-domain-like"/>
    <property type="match status" value="1"/>
</dbReference>
<dbReference type="SUPFAM" id="SSF55653">
    <property type="entry name" value="Ribosomal protein L9 C-domain"/>
    <property type="match status" value="1"/>
</dbReference>
<dbReference type="PROSITE" id="PS00651">
    <property type="entry name" value="RIBOSOMAL_L9"/>
    <property type="match status" value="1"/>
</dbReference>
<gene>
    <name evidence="1" type="primary">rplI</name>
    <name type="ordered locus">Gura_3675</name>
</gene>
<protein>
    <recommendedName>
        <fullName evidence="1">Large ribosomal subunit protein bL9</fullName>
    </recommendedName>
    <alternativeName>
        <fullName evidence="2">50S ribosomal protein L9</fullName>
    </alternativeName>
</protein>